<protein>
    <recommendedName>
        <fullName>Histidine ammonia-lyase</fullName>
        <shortName>Histidase</shortName>
        <ecNumber>4.3.1.3</ecNumber>
    </recommendedName>
</protein>
<reference key="1">
    <citation type="journal article" date="2001" name="Lancet">
        <title>Whole genome sequencing of meticillin-resistant Staphylococcus aureus.</title>
        <authorList>
            <person name="Kuroda M."/>
            <person name="Ohta T."/>
            <person name="Uchiyama I."/>
            <person name="Baba T."/>
            <person name="Yuzawa H."/>
            <person name="Kobayashi I."/>
            <person name="Cui L."/>
            <person name="Oguchi A."/>
            <person name="Aoki K."/>
            <person name="Nagai Y."/>
            <person name="Lian J.-Q."/>
            <person name="Ito T."/>
            <person name="Kanamori M."/>
            <person name="Matsumaru H."/>
            <person name="Maruyama A."/>
            <person name="Murakami H."/>
            <person name="Hosoyama A."/>
            <person name="Mizutani-Ui Y."/>
            <person name="Takahashi N.K."/>
            <person name="Sawano T."/>
            <person name="Inoue R."/>
            <person name="Kaito C."/>
            <person name="Sekimizu K."/>
            <person name="Hirakawa H."/>
            <person name="Kuhara S."/>
            <person name="Goto S."/>
            <person name="Yabuzaki J."/>
            <person name="Kanehisa M."/>
            <person name="Yamashita A."/>
            <person name="Oshima K."/>
            <person name="Furuya K."/>
            <person name="Yoshino C."/>
            <person name="Shiba T."/>
            <person name="Hattori M."/>
            <person name="Ogasawara N."/>
            <person name="Hayashi H."/>
            <person name="Hiramatsu K."/>
        </authorList>
    </citation>
    <scope>NUCLEOTIDE SEQUENCE [LARGE SCALE GENOMIC DNA]</scope>
    <source>
        <strain>Mu50 / ATCC 700699</strain>
    </source>
</reference>
<comment type="catalytic activity">
    <reaction>
        <text>L-histidine = trans-urocanate + NH4(+)</text>
        <dbReference type="Rhea" id="RHEA:21232"/>
        <dbReference type="ChEBI" id="CHEBI:17771"/>
        <dbReference type="ChEBI" id="CHEBI:28938"/>
        <dbReference type="ChEBI" id="CHEBI:57595"/>
        <dbReference type="EC" id="4.3.1.3"/>
    </reaction>
</comment>
<comment type="pathway">
    <text>Amino-acid degradation; L-histidine degradation into L-glutamate; N-formimidoyl-L-glutamate from L-histidine: step 1/3.</text>
</comment>
<comment type="subcellular location">
    <subcellularLocation>
        <location evidence="2">Cytoplasm</location>
    </subcellularLocation>
</comment>
<comment type="PTM">
    <text evidence="1">Contains an active site 4-methylidene-imidazol-5-one (MIO), which is formed autocatalytically by cyclization and dehydration of residues Ala-Ser-Gly.</text>
</comment>
<comment type="similarity">
    <text evidence="2">Belongs to the PAL/histidase family.</text>
</comment>
<comment type="sequence caution" evidence="2">
    <conflict type="erroneous initiation">
        <sequence resource="EMBL-CDS" id="BAB56170"/>
    </conflict>
</comment>
<gene>
    <name type="primary">hutH</name>
    <name type="ordered locus">SAV0008</name>
</gene>
<sequence length="504" mass="56090">MTLYLDGETLTIEDIKSFLQQQSKIEIIDDALERVKKSRAVVERIIENEETVYGITTGFGLFSDVRIDPTQYNELQVNLIRSHACGLGEPFSKEVALVMMILRLNTLLKGHSGATLELVRQLQFFINERIIPIIPQQGSLGASGDLAPLSHLALALIGEGKVLYRGEEKDSDDVLRELNRQPLNLQAKEGLALINGTQAMTAQGVISYIEAEDLGYQSEWIAALTHQSLNGIIDAYRHDVHSVRNFQEQINVAARMRDWLEGSTLTTRQAEIRVQDAYTLRCIPQIHGASFQVFNYVKQQLEFEMNAANDNPLIFEEANETFVISGGNFHGQPIAFALDHLKLGVSELANVSERRLERLVNPQLNGDLPAFLSPEPGLQSGAMIMQYAAASLVSENKTLAHPASVDSITSSANQEDHVSMGTTAARHGYQIIENARRVLAIECVIALQAAELKGVEGLSPKTRRKYEEFRSIVPSITHDRQFHKDIEAVAQYLKQSIYQTTACH</sequence>
<evidence type="ECO:0000250" key="1"/>
<evidence type="ECO:0000305" key="2"/>
<proteinExistence type="inferred from homology"/>
<dbReference type="EC" id="4.3.1.3"/>
<dbReference type="EMBL" id="BA000017">
    <property type="protein sequence ID" value="BAB56170.1"/>
    <property type="status" value="ALT_INIT"/>
    <property type="molecule type" value="Genomic_DNA"/>
</dbReference>
<dbReference type="RefSeq" id="WP_000177465.1">
    <property type="nucleotide sequence ID" value="NC_002758.2"/>
</dbReference>
<dbReference type="SMR" id="P64415"/>
<dbReference type="KEGG" id="sav:SAV0008"/>
<dbReference type="HOGENOM" id="CLU_014801_4_0_9"/>
<dbReference type="PhylomeDB" id="P64415"/>
<dbReference type="UniPathway" id="UPA00379">
    <property type="reaction ID" value="UER00549"/>
</dbReference>
<dbReference type="Proteomes" id="UP000002481">
    <property type="component" value="Chromosome"/>
</dbReference>
<dbReference type="GO" id="GO:0005737">
    <property type="term" value="C:cytoplasm"/>
    <property type="evidence" value="ECO:0007669"/>
    <property type="project" value="UniProtKB-SubCell"/>
</dbReference>
<dbReference type="GO" id="GO:0004397">
    <property type="term" value="F:histidine ammonia-lyase activity"/>
    <property type="evidence" value="ECO:0007669"/>
    <property type="project" value="UniProtKB-UniRule"/>
</dbReference>
<dbReference type="GO" id="GO:0019556">
    <property type="term" value="P:L-histidine catabolic process to glutamate and formamide"/>
    <property type="evidence" value="ECO:0007669"/>
    <property type="project" value="UniProtKB-UniPathway"/>
</dbReference>
<dbReference type="GO" id="GO:0019557">
    <property type="term" value="P:L-histidine catabolic process to glutamate and formate"/>
    <property type="evidence" value="ECO:0007669"/>
    <property type="project" value="UniProtKB-UniPathway"/>
</dbReference>
<dbReference type="CDD" id="cd00332">
    <property type="entry name" value="PAL-HAL"/>
    <property type="match status" value="1"/>
</dbReference>
<dbReference type="FunFam" id="1.10.275.10:FF:000008">
    <property type="entry name" value="Histidine ammonia-lyase"/>
    <property type="match status" value="1"/>
</dbReference>
<dbReference type="FunFam" id="1.20.200.10:FF:000003">
    <property type="entry name" value="Histidine ammonia-lyase"/>
    <property type="match status" value="1"/>
</dbReference>
<dbReference type="Gene3D" id="1.20.200.10">
    <property type="entry name" value="Fumarase/aspartase (Central domain)"/>
    <property type="match status" value="1"/>
</dbReference>
<dbReference type="Gene3D" id="1.10.275.10">
    <property type="entry name" value="Fumarase/aspartase (N-terminal domain)"/>
    <property type="match status" value="1"/>
</dbReference>
<dbReference type="HAMAP" id="MF_00229">
    <property type="entry name" value="His_ammonia_lyase"/>
    <property type="match status" value="1"/>
</dbReference>
<dbReference type="InterPro" id="IPR001106">
    <property type="entry name" value="Aromatic_Lyase"/>
</dbReference>
<dbReference type="InterPro" id="IPR024083">
    <property type="entry name" value="Fumarase/histidase_N"/>
</dbReference>
<dbReference type="InterPro" id="IPR005921">
    <property type="entry name" value="HutH"/>
</dbReference>
<dbReference type="InterPro" id="IPR008948">
    <property type="entry name" value="L-Aspartase-like"/>
</dbReference>
<dbReference type="InterPro" id="IPR022313">
    <property type="entry name" value="Phe/His_NH3-lyase_AS"/>
</dbReference>
<dbReference type="NCBIfam" id="TIGR01225">
    <property type="entry name" value="hutH"/>
    <property type="match status" value="1"/>
</dbReference>
<dbReference type="NCBIfam" id="NF006871">
    <property type="entry name" value="PRK09367.1"/>
    <property type="match status" value="1"/>
</dbReference>
<dbReference type="PANTHER" id="PTHR10362">
    <property type="entry name" value="HISTIDINE AMMONIA-LYASE"/>
    <property type="match status" value="1"/>
</dbReference>
<dbReference type="Pfam" id="PF00221">
    <property type="entry name" value="Lyase_aromatic"/>
    <property type="match status" value="1"/>
</dbReference>
<dbReference type="SUPFAM" id="SSF48557">
    <property type="entry name" value="L-aspartase-like"/>
    <property type="match status" value="1"/>
</dbReference>
<dbReference type="PROSITE" id="PS00488">
    <property type="entry name" value="PAL_HISTIDASE"/>
    <property type="match status" value="1"/>
</dbReference>
<keyword id="KW-0963">Cytoplasm</keyword>
<keyword id="KW-0369">Histidine metabolism</keyword>
<keyword id="KW-0456">Lyase</keyword>
<organism>
    <name type="scientific">Staphylococcus aureus (strain Mu50 / ATCC 700699)</name>
    <dbReference type="NCBI Taxonomy" id="158878"/>
    <lineage>
        <taxon>Bacteria</taxon>
        <taxon>Bacillati</taxon>
        <taxon>Bacillota</taxon>
        <taxon>Bacilli</taxon>
        <taxon>Bacillales</taxon>
        <taxon>Staphylococcaceae</taxon>
        <taxon>Staphylococcus</taxon>
    </lineage>
</organism>
<name>HUTH_STAAM</name>
<feature type="chain" id="PRO_0000161030" description="Histidine ammonia-lyase">
    <location>
        <begin position="1"/>
        <end position="504"/>
    </location>
</feature>
<feature type="modified residue" description="2,3-didehydroalanine (Ser)" evidence="1">
    <location>
        <position position="143"/>
    </location>
</feature>
<feature type="cross-link" description="5-imidazolinone (Ala-Gly)" evidence="1">
    <location>
        <begin position="142"/>
        <end position="144"/>
    </location>
</feature>
<accession>P64415</accession>
<accession>Q99XG3</accession>